<feature type="chain" id="PRO_0000135198" description="Signal recognition particle 19 kDa protein">
    <location>
        <begin position="1"/>
        <end position="144"/>
    </location>
</feature>
<feature type="region of interest" description="Disordered" evidence="3">
    <location>
        <begin position="118"/>
        <end position="144"/>
    </location>
</feature>
<keyword id="KW-0963">Cytoplasm</keyword>
<keyword id="KW-0539">Nucleus</keyword>
<keyword id="KW-1185">Reference proteome</keyword>
<keyword id="KW-0687">Ribonucleoprotein</keyword>
<keyword id="KW-0694">RNA-binding</keyword>
<keyword id="KW-0733">Signal recognition particle</keyword>
<evidence type="ECO:0000250" key="1">
    <source>
        <dbReference type="UniProtKB" id="J9PAS6"/>
    </source>
</evidence>
<evidence type="ECO:0000250" key="2">
    <source>
        <dbReference type="UniProtKB" id="P09132"/>
    </source>
</evidence>
<evidence type="ECO:0000256" key="3">
    <source>
        <dbReference type="SAM" id="MobiDB-lite"/>
    </source>
</evidence>
<evidence type="ECO:0000305" key="4"/>
<protein>
    <recommendedName>
        <fullName>Signal recognition particle 19 kDa protein</fullName>
        <shortName>SRP19</shortName>
    </recommendedName>
</protein>
<proteinExistence type="evidence at protein level"/>
<dbReference type="EMBL" id="AK009412">
    <property type="protein sequence ID" value="BAB26271.1"/>
    <property type="molecule type" value="mRNA"/>
</dbReference>
<dbReference type="CCDS" id="CCDS37757.1"/>
<dbReference type="SMR" id="Q9D7A6"/>
<dbReference type="FunCoup" id="Q9D7A6">
    <property type="interactions" value="3050"/>
</dbReference>
<dbReference type="STRING" id="10090.ENSMUSP00000072386"/>
<dbReference type="PhosphoSitePlus" id="Q9D7A6"/>
<dbReference type="SwissPalm" id="Q9D7A6"/>
<dbReference type="jPOST" id="Q9D7A6"/>
<dbReference type="PaxDb" id="10090-ENSMUSP00000072386"/>
<dbReference type="PeptideAtlas" id="Q9D7A6"/>
<dbReference type="ProteomicsDB" id="257363"/>
<dbReference type="Pumba" id="Q9D7A6"/>
<dbReference type="AGR" id="MGI:1913634"/>
<dbReference type="MGI" id="MGI:1913634">
    <property type="gene designation" value="Srp19"/>
</dbReference>
<dbReference type="eggNOG" id="KOG3198">
    <property type="taxonomic scope" value="Eukaryota"/>
</dbReference>
<dbReference type="InParanoid" id="Q9D7A6"/>
<dbReference type="PhylomeDB" id="Q9D7A6"/>
<dbReference type="Reactome" id="R-MMU-1799339">
    <property type="pathway name" value="SRP-dependent cotranslational protein targeting to membrane"/>
</dbReference>
<dbReference type="ChiTaRS" id="Srp19">
    <property type="organism name" value="mouse"/>
</dbReference>
<dbReference type="PRO" id="PR:Q9D7A6"/>
<dbReference type="Proteomes" id="UP000000589">
    <property type="component" value="Unplaced"/>
</dbReference>
<dbReference type="RNAct" id="Q9D7A6">
    <property type="molecule type" value="protein"/>
</dbReference>
<dbReference type="GO" id="GO:0005730">
    <property type="term" value="C:nucleolus"/>
    <property type="evidence" value="ECO:0000266"/>
    <property type="project" value="MGI"/>
</dbReference>
<dbReference type="GO" id="GO:0005654">
    <property type="term" value="C:nucleoplasm"/>
    <property type="evidence" value="ECO:0007669"/>
    <property type="project" value="UniProtKB-SubCell"/>
</dbReference>
<dbReference type="GO" id="GO:0005786">
    <property type="term" value="C:signal recognition particle, endoplasmic reticulum targeting"/>
    <property type="evidence" value="ECO:0007669"/>
    <property type="project" value="UniProtKB-KW"/>
</dbReference>
<dbReference type="GO" id="GO:0008312">
    <property type="term" value="F:7S RNA binding"/>
    <property type="evidence" value="ECO:0007669"/>
    <property type="project" value="InterPro"/>
</dbReference>
<dbReference type="GO" id="GO:0006614">
    <property type="term" value="P:SRP-dependent cotranslational protein targeting to membrane"/>
    <property type="evidence" value="ECO:0007669"/>
    <property type="project" value="InterPro"/>
</dbReference>
<dbReference type="FunFam" id="3.30.56.30:FF:000001">
    <property type="entry name" value="signal recognition particle 19 kDa protein"/>
    <property type="match status" value="1"/>
</dbReference>
<dbReference type="Gene3D" id="3.30.56.30">
    <property type="entry name" value="Signal recognition particle, SRP19-like subunit"/>
    <property type="match status" value="1"/>
</dbReference>
<dbReference type="InterPro" id="IPR002778">
    <property type="entry name" value="Signal_recog_particle_SRP19"/>
</dbReference>
<dbReference type="InterPro" id="IPR036521">
    <property type="entry name" value="SRP19-like_sf"/>
</dbReference>
<dbReference type="PANTHER" id="PTHR17453">
    <property type="entry name" value="SIGNAL RECOGNITION PARTICLE 19 KD PROTEIN"/>
    <property type="match status" value="1"/>
</dbReference>
<dbReference type="PANTHER" id="PTHR17453:SF0">
    <property type="entry name" value="SIGNAL RECOGNITION PARTICLE 19 KDA PROTEIN"/>
    <property type="match status" value="1"/>
</dbReference>
<dbReference type="Pfam" id="PF01922">
    <property type="entry name" value="SRP19"/>
    <property type="match status" value="1"/>
</dbReference>
<dbReference type="SUPFAM" id="SSF69695">
    <property type="entry name" value="SRP19"/>
    <property type="match status" value="1"/>
</dbReference>
<accession>Q9D7A6</accession>
<comment type="function">
    <text evidence="1">Component of the signal recognition particle (SRP) complex, a ribonucleoprotein complex that mediates the cotranslational targeting of secretory and membrane proteins to the endoplasmic reticulum (ER) (By similarity). Binds directly to 7SL RNA (By similarity). Mediates binding of SRP54 to the SRP complex (By similarity).</text>
</comment>
<comment type="subunit">
    <text evidence="2">Component of a signal recognition particle complex that consists of a 7SL RNA molecule of 300 nucleotides and 6 protein subunits: SRP72, SRP68, SRP54, SRP19, SRP14 and SRP9 (By similarity). Interacts with IPO5, IPO7, IPO8, KPNB1 and TNPO1. Interactions with IPO8 and TNPO1 may be involved in SRP19 import into the nucleus (By similarity).</text>
</comment>
<comment type="subcellular location">
    <subcellularLocation>
        <location evidence="2">Cytoplasm</location>
    </subcellularLocation>
    <subcellularLocation>
        <location evidence="2">Nucleus</location>
        <location evidence="2">Nucleolus</location>
    </subcellularLocation>
    <subcellularLocation>
        <location evidence="2">Nucleus</location>
        <location evidence="2">Nucleoplasm</location>
    </subcellularLocation>
    <text evidence="2">Although the signal recognition particle complex acts in the cytoplasm, it assembles at least in part in the nucleus and/or the nucleolus. SRP19 nuclear import may be mediated by IPO8/Imp8 and TPNO1/Trn.</text>
</comment>
<comment type="similarity">
    <text evidence="4">Belongs to the SRP19 family.</text>
</comment>
<sequence>MACSAARPPADQDRFIFIYPAYLNNKKTIAEGRRIPISKAVENPTATEIQDVCSAVGLNAFLEKNKMYSREWNRDVQFRGRVRVQLKQEDGSLCLVQFPSRKSVMLYVAEMIPKLKTRTQKSGGADPILQQGEGSKKGKGKKKK</sequence>
<gene>
    <name type="primary">Srp19</name>
</gene>
<reference key="1">
    <citation type="journal article" date="2005" name="Science">
        <title>The transcriptional landscape of the mammalian genome.</title>
        <authorList>
            <person name="Carninci P."/>
            <person name="Kasukawa T."/>
            <person name="Katayama S."/>
            <person name="Gough J."/>
            <person name="Frith M.C."/>
            <person name="Maeda N."/>
            <person name="Oyama R."/>
            <person name="Ravasi T."/>
            <person name="Lenhard B."/>
            <person name="Wells C."/>
            <person name="Kodzius R."/>
            <person name="Shimokawa K."/>
            <person name="Bajic V.B."/>
            <person name="Brenner S.E."/>
            <person name="Batalov S."/>
            <person name="Forrest A.R."/>
            <person name="Zavolan M."/>
            <person name="Davis M.J."/>
            <person name="Wilming L.G."/>
            <person name="Aidinis V."/>
            <person name="Allen J.E."/>
            <person name="Ambesi-Impiombato A."/>
            <person name="Apweiler R."/>
            <person name="Aturaliya R.N."/>
            <person name="Bailey T.L."/>
            <person name="Bansal M."/>
            <person name="Baxter L."/>
            <person name="Beisel K.W."/>
            <person name="Bersano T."/>
            <person name="Bono H."/>
            <person name="Chalk A.M."/>
            <person name="Chiu K.P."/>
            <person name="Choudhary V."/>
            <person name="Christoffels A."/>
            <person name="Clutterbuck D.R."/>
            <person name="Crowe M.L."/>
            <person name="Dalla E."/>
            <person name="Dalrymple B.P."/>
            <person name="de Bono B."/>
            <person name="Della Gatta G."/>
            <person name="di Bernardo D."/>
            <person name="Down T."/>
            <person name="Engstrom P."/>
            <person name="Fagiolini M."/>
            <person name="Faulkner G."/>
            <person name="Fletcher C.F."/>
            <person name="Fukushima T."/>
            <person name="Furuno M."/>
            <person name="Futaki S."/>
            <person name="Gariboldi M."/>
            <person name="Georgii-Hemming P."/>
            <person name="Gingeras T.R."/>
            <person name="Gojobori T."/>
            <person name="Green R.E."/>
            <person name="Gustincich S."/>
            <person name="Harbers M."/>
            <person name="Hayashi Y."/>
            <person name="Hensch T.K."/>
            <person name="Hirokawa N."/>
            <person name="Hill D."/>
            <person name="Huminiecki L."/>
            <person name="Iacono M."/>
            <person name="Ikeo K."/>
            <person name="Iwama A."/>
            <person name="Ishikawa T."/>
            <person name="Jakt M."/>
            <person name="Kanapin A."/>
            <person name="Katoh M."/>
            <person name="Kawasawa Y."/>
            <person name="Kelso J."/>
            <person name="Kitamura H."/>
            <person name="Kitano H."/>
            <person name="Kollias G."/>
            <person name="Krishnan S.P."/>
            <person name="Kruger A."/>
            <person name="Kummerfeld S.K."/>
            <person name="Kurochkin I.V."/>
            <person name="Lareau L.F."/>
            <person name="Lazarevic D."/>
            <person name="Lipovich L."/>
            <person name="Liu J."/>
            <person name="Liuni S."/>
            <person name="McWilliam S."/>
            <person name="Madan Babu M."/>
            <person name="Madera M."/>
            <person name="Marchionni L."/>
            <person name="Matsuda H."/>
            <person name="Matsuzawa S."/>
            <person name="Miki H."/>
            <person name="Mignone F."/>
            <person name="Miyake S."/>
            <person name="Morris K."/>
            <person name="Mottagui-Tabar S."/>
            <person name="Mulder N."/>
            <person name="Nakano N."/>
            <person name="Nakauchi H."/>
            <person name="Ng P."/>
            <person name="Nilsson R."/>
            <person name="Nishiguchi S."/>
            <person name="Nishikawa S."/>
            <person name="Nori F."/>
            <person name="Ohara O."/>
            <person name="Okazaki Y."/>
            <person name="Orlando V."/>
            <person name="Pang K.C."/>
            <person name="Pavan W.J."/>
            <person name="Pavesi G."/>
            <person name="Pesole G."/>
            <person name="Petrovsky N."/>
            <person name="Piazza S."/>
            <person name="Reed J."/>
            <person name="Reid J.F."/>
            <person name="Ring B.Z."/>
            <person name="Ringwald M."/>
            <person name="Rost B."/>
            <person name="Ruan Y."/>
            <person name="Salzberg S.L."/>
            <person name="Sandelin A."/>
            <person name="Schneider C."/>
            <person name="Schoenbach C."/>
            <person name="Sekiguchi K."/>
            <person name="Semple C.A."/>
            <person name="Seno S."/>
            <person name="Sessa L."/>
            <person name="Sheng Y."/>
            <person name="Shibata Y."/>
            <person name="Shimada H."/>
            <person name="Shimada K."/>
            <person name="Silva D."/>
            <person name="Sinclair B."/>
            <person name="Sperling S."/>
            <person name="Stupka E."/>
            <person name="Sugiura K."/>
            <person name="Sultana R."/>
            <person name="Takenaka Y."/>
            <person name="Taki K."/>
            <person name="Tammoja K."/>
            <person name="Tan S.L."/>
            <person name="Tang S."/>
            <person name="Taylor M.S."/>
            <person name="Tegner J."/>
            <person name="Teichmann S.A."/>
            <person name="Ueda H.R."/>
            <person name="van Nimwegen E."/>
            <person name="Verardo R."/>
            <person name="Wei C.L."/>
            <person name="Yagi K."/>
            <person name="Yamanishi H."/>
            <person name="Zabarovsky E."/>
            <person name="Zhu S."/>
            <person name="Zimmer A."/>
            <person name="Hide W."/>
            <person name="Bult C."/>
            <person name="Grimmond S.M."/>
            <person name="Teasdale R.D."/>
            <person name="Liu E.T."/>
            <person name="Brusic V."/>
            <person name="Quackenbush J."/>
            <person name="Wahlestedt C."/>
            <person name="Mattick J.S."/>
            <person name="Hume D.A."/>
            <person name="Kai C."/>
            <person name="Sasaki D."/>
            <person name="Tomaru Y."/>
            <person name="Fukuda S."/>
            <person name="Kanamori-Katayama M."/>
            <person name="Suzuki M."/>
            <person name="Aoki J."/>
            <person name="Arakawa T."/>
            <person name="Iida J."/>
            <person name="Imamura K."/>
            <person name="Itoh M."/>
            <person name="Kato T."/>
            <person name="Kawaji H."/>
            <person name="Kawagashira N."/>
            <person name="Kawashima T."/>
            <person name="Kojima M."/>
            <person name="Kondo S."/>
            <person name="Konno H."/>
            <person name="Nakano K."/>
            <person name="Ninomiya N."/>
            <person name="Nishio T."/>
            <person name="Okada M."/>
            <person name="Plessy C."/>
            <person name="Shibata K."/>
            <person name="Shiraki T."/>
            <person name="Suzuki S."/>
            <person name="Tagami M."/>
            <person name="Waki K."/>
            <person name="Watahiki A."/>
            <person name="Okamura-Oho Y."/>
            <person name="Suzuki H."/>
            <person name="Kawai J."/>
            <person name="Hayashizaki Y."/>
        </authorList>
    </citation>
    <scope>NUCLEOTIDE SEQUENCE [LARGE SCALE MRNA]</scope>
    <source>
        <strain>C57BL/6J</strain>
        <tissue>Tongue</tissue>
    </source>
</reference>
<reference key="2">
    <citation type="journal article" date="2010" name="Cell">
        <title>A tissue-specific atlas of mouse protein phosphorylation and expression.</title>
        <authorList>
            <person name="Huttlin E.L."/>
            <person name="Jedrychowski M.P."/>
            <person name="Elias J.E."/>
            <person name="Goswami T."/>
            <person name="Rad R."/>
            <person name="Beausoleil S.A."/>
            <person name="Villen J."/>
            <person name="Haas W."/>
            <person name="Sowa M.E."/>
            <person name="Gygi S.P."/>
        </authorList>
    </citation>
    <scope>IDENTIFICATION BY MASS SPECTROMETRY [LARGE SCALE ANALYSIS]</scope>
    <source>
        <tissue>Brain</tissue>
        <tissue>Brown adipose tissue</tissue>
        <tissue>Kidney</tissue>
        <tissue>Liver</tissue>
        <tissue>Lung</tissue>
        <tissue>Pancreas</tissue>
        <tissue>Spleen</tissue>
        <tissue>Testis</tissue>
    </source>
</reference>
<name>SRP19_MOUSE</name>
<organism>
    <name type="scientific">Mus musculus</name>
    <name type="common">Mouse</name>
    <dbReference type="NCBI Taxonomy" id="10090"/>
    <lineage>
        <taxon>Eukaryota</taxon>
        <taxon>Metazoa</taxon>
        <taxon>Chordata</taxon>
        <taxon>Craniata</taxon>
        <taxon>Vertebrata</taxon>
        <taxon>Euteleostomi</taxon>
        <taxon>Mammalia</taxon>
        <taxon>Eutheria</taxon>
        <taxon>Euarchontoglires</taxon>
        <taxon>Glires</taxon>
        <taxon>Rodentia</taxon>
        <taxon>Myomorpha</taxon>
        <taxon>Muroidea</taxon>
        <taxon>Muridae</taxon>
        <taxon>Murinae</taxon>
        <taxon>Mus</taxon>
        <taxon>Mus</taxon>
    </lineage>
</organism>